<protein>
    <recommendedName>
        <fullName>DNA-directed RNA polymerase subunit p47</fullName>
    </recommendedName>
</protein>
<reference key="1">
    <citation type="journal article" date="1993" name="J. Virol.">
        <title>Sequence, transcriptional mapping, and overexpression of p47, a baculovirus gene regulating late gene expression.</title>
        <authorList>
            <person name="Carstens E.B."/>
            <person name="Lu A.L."/>
            <person name="Chan H.L.B."/>
        </authorList>
    </citation>
    <scope>NUCLEOTIDE SEQUENCE</scope>
    <scope>SUBCELLULAR LOCATION</scope>
    <source>
        <strain>HR3</strain>
    </source>
</reference>
<reference key="2">
    <citation type="journal article" date="1994" name="Virology">
        <title>The complete DNA sequence of Autographa californica nuclear polyhedrosis virus.</title>
        <authorList>
            <person name="Ayres M.D."/>
            <person name="Howard S.C."/>
            <person name="Kuzio J."/>
            <person name="Lopez-Ferber M."/>
            <person name="Possee R.D."/>
        </authorList>
    </citation>
    <scope>NUCLEOTIDE SEQUENCE [LARGE SCALE GENOMIC DNA]</scope>
    <source>
        <strain>C6</strain>
    </source>
</reference>
<reference key="3">
    <citation type="journal article" date="1998" name="J. Virol.">
        <title>A virus-encoded RNA polymerase purified from baculovirus-infected cells.</title>
        <authorList>
            <person name="Guarino L.A."/>
            <person name="Xu B."/>
            <person name="Jin J."/>
            <person name="Dong W."/>
        </authorList>
    </citation>
    <scope>INTERACTION WITH LEF-4; LEF-8 AND LEF-9</scope>
    <scope>FUNCTION</scope>
</reference>
<gene>
    <name type="primary">P47</name>
</gene>
<comment type="function">
    <text evidence="2">Component of the viral DNA-dependent RNA polymerase which is composed of four equimolar subunits of LEF-4, LEF-8, LEF-9, and p47. Plays an essential role in late and very late gene expression.</text>
</comment>
<comment type="subunit">
    <text evidence="2">Interacts with LEF-4, LEF-8, and LEF-9.</text>
</comment>
<comment type="subcellular location">
    <subcellularLocation>
        <location evidence="1">Host nucleus</location>
    </subcellularLocation>
</comment>
<comment type="similarity">
    <text evidence="3">Belongs to the baculoviridae p47 family.</text>
</comment>
<sequence length="401" mass="47531">MFVTRLEHTTQFLPQACKLEDEVLVLYAIYLNGFDYTLPRFVKREVQVNADGFVRFDYNIKMFDFARFTDMTQTTPEDIDDYINLTRINSLSDHDLKMLQLVCRDRWYKGDVARLRRILQQKDVDDLVKFVCNVMWERAYEDHYTLGQQLSIRITTKLIQSGLDFKHQPDTTAPVSVRGWEDATFEKYLQSITSISEVIKRHVFSKKYICLEVAASYWSDAVESLQQENFRIILNSKTPYVLLIEMDDDKNSMVYLRKLAHLLENKIVNLLFVTDVEFYFKNGNFMFYLYNSLKFYYYCLKNKFAFENVDKEIFFLLYTIVALEWFNGGHLNSFTLEKSALYNPLELSTRRLNSIKRAAQHNRVINCDSEINMDYIRGKRVRTGAHYGKRVVNFDLNQSLH</sequence>
<proteinExistence type="evidence at protein level"/>
<feature type="chain" id="PRO_0000132908" description="DNA-directed RNA polymerase subunit p47">
    <location>
        <begin position="1"/>
        <end position="401"/>
    </location>
</feature>
<feature type="sequence variant" description="Temperature-sensitive mutant.">
    <original>V</original>
    <variation>M</variation>
    <location>
        <position position="131"/>
    </location>
</feature>
<keyword id="KW-1048">Host nucleus</keyword>
<keyword id="KW-1185">Reference proteome</keyword>
<keyword id="KW-0804">Transcription</keyword>
<keyword id="KW-0805">Transcription regulation</keyword>
<organism>
    <name type="scientific">Autographa californica nuclear polyhedrosis virus</name>
    <name type="common">AcMNPV</name>
    <dbReference type="NCBI Taxonomy" id="46015"/>
    <lineage>
        <taxon>Viruses</taxon>
        <taxon>Viruses incertae sedis</taxon>
        <taxon>Naldaviricetes</taxon>
        <taxon>Lefavirales</taxon>
        <taxon>Baculoviridae</taxon>
        <taxon>Alphabaculovirus</taxon>
        <taxon>Alphabaculovirus aucalifornicae</taxon>
    </lineage>
</organism>
<evidence type="ECO:0000269" key="1">
    <source>
    </source>
</evidence>
<evidence type="ECO:0000269" key="2">
    <source>
    </source>
</evidence>
<evidence type="ECO:0000305" key="3"/>
<organismHost>
    <name type="scientific">Lepidoptera</name>
    <name type="common">butterflies and moths</name>
    <dbReference type="NCBI Taxonomy" id="7088"/>
</organismHost>
<dbReference type="EMBL" id="L07878">
    <property type="protein sequence ID" value="AAA16859.1"/>
    <property type="molecule type" value="Unassigned_DNA"/>
</dbReference>
<dbReference type="EMBL" id="L22858">
    <property type="protein sequence ID" value="AAA66670.1"/>
    <property type="molecule type" value="Genomic_DNA"/>
</dbReference>
<dbReference type="PIR" id="H72854">
    <property type="entry name" value="H72854"/>
</dbReference>
<dbReference type="KEGG" id="vg:1403872"/>
<dbReference type="OrthoDB" id="6161at10239"/>
<dbReference type="Proteomes" id="UP000008292">
    <property type="component" value="Segment"/>
</dbReference>
<dbReference type="GO" id="GO:0042025">
    <property type="term" value="C:host cell nucleus"/>
    <property type="evidence" value="ECO:0007669"/>
    <property type="project" value="UniProtKB-SubCell"/>
</dbReference>
<dbReference type="GO" id="GO:0039695">
    <property type="term" value="P:DNA-templated viral transcription"/>
    <property type="evidence" value="ECO:0000314"/>
    <property type="project" value="UniProtKB"/>
</dbReference>
<dbReference type="GO" id="GO:0046782">
    <property type="term" value="P:regulation of viral transcription"/>
    <property type="evidence" value="ECO:0007669"/>
    <property type="project" value="InterPro"/>
</dbReference>
<dbReference type="InterPro" id="IPR007799">
    <property type="entry name" value="Baculo_p47"/>
</dbReference>
<dbReference type="Pfam" id="PF05112">
    <property type="entry name" value="Baculo_p47"/>
    <property type="match status" value="1"/>
</dbReference>
<name>VP47_NPVAC</name>
<accession>P34051</accession>